<organism>
    <name type="scientific">Rattus norvegicus</name>
    <name type="common">Rat</name>
    <dbReference type="NCBI Taxonomy" id="10116"/>
    <lineage>
        <taxon>Eukaryota</taxon>
        <taxon>Metazoa</taxon>
        <taxon>Chordata</taxon>
        <taxon>Craniata</taxon>
        <taxon>Vertebrata</taxon>
        <taxon>Euteleostomi</taxon>
        <taxon>Mammalia</taxon>
        <taxon>Eutheria</taxon>
        <taxon>Euarchontoglires</taxon>
        <taxon>Glires</taxon>
        <taxon>Rodentia</taxon>
        <taxon>Myomorpha</taxon>
        <taxon>Muroidea</taxon>
        <taxon>Muridae</taxon>
        <taxon>Murinae</taxon>
        <taxon>Rattus</taxon>
    </lineage>
</organism>
<feature type="chain" id="PRO_0000183020" description="Synapsin-1">
    <location>
        <begin position="1"/>
        <end position="704"/>
    </location>
</feature>
<feature type="region of interest" description="A">
    <location>
        <begin position="1"/>
        <end position="28"/>
    </location>
</feature>
<feature type="region of interest" description="Disordered" evidence="5">
    <location>
        <begin position="15"/>
        <end position="72"/>
    </location>
</feature>
<feature type="region of interest" description="B; linker">
    <location>
        <begin position="29"/>
        <end position="112"/>
    </location>
</feature>
<feature type="region of interest" description="C; actin-binding and synaptic-vesicle binding">
    <location>
        <begin position="113"/>
        <end position="420"/>
    </location>
</feature>
<feature type="region of interest" description="Disordered" evidence="5">
    <location>
        <begin position="418"/>
        <end position="688"/>
    </location>
</feature>
<feature type="region of interest" description="D; Pro-rich linker">
    <location>
        <begin position="421"/>
        <end position="655"/>
    </location>
</feature>
<feature type="region of interest" description="E">
    <location>
        <begin position="656"/>
        <end position="704"/>
    </location>
</feature>
<feature type="compositionally biased region" description="Pro residues" evidence="5">
    <location>
        <begin position="28"/>
        <end position="37"/>
    </location>
</feature>
<feature type="compositionally biased region" description="Low complexity" evidence="5">
    <location>
        <begin position="38"/>
        <end position="69"/>
    </location>
</feature>
<feature type="compositionally biased region" description="Pro residues" evidence="5">
    <location>
        <begin position="451"/>
        <end position="471"/>
    </location>
</feature>
<feature type="compositionally biased region" description="Low complexity" evidence="5">
    <location>
        <begin position="487"/>
        <end position="497"/>
    </location>
</feature>
<feature type="compositionally biased region" description="Low complexity" evidence="5">
    <location>
        <begin position="507"/>
        <end position="522"/>
    </location>
</feature>
<feature type="compositionally biased region" description="Pro residues" evidence="5">
    <location>
        <begin position="539"/>
        <end position="550"/>
    </location>
</feature>
<feature type="compositionally biased region" description="Low complexity" evidence="5">
    <location>
        <begin position="551"/>
        <end position="561"/>
    </location>
</feature>
<feature type="compositionally biased region" description="Polar residues" evidence="5">
    <location>
        <begin position="659"/>
        <end position="669"/>
    </location>
</feature>
<feature type="modified residue" description="Phosphoserine; by CaMK1 and PKA" evidence="13">
    <location>
        <position position="9"/>
    </location>
</feature>
<feature type="modified residue" description="Phosphoserine" evidence="16">
    <location>
        <position position="39"/>
    </location>
</feature>
<feature type="modified residue" description="Phosphoserine" evidence="16">
    <location>
        <position position="62"/>
    </location>
</feature>
<feature type="modified residue" description="Phosphoserine" evidence="16">
    <location>
        <position position="67"/>
    </location>
</feature>
<feature type="modified residue" description="Phosphotyrosine" evidence="2">
    <location>
        <position position="312"/>
    </location>
</feature>
<feature type="modified residue" description="Phosphoserine" evidence="16">
    <location>
        <position position="425"/>
    </location>
</feature>
<feature type="modified residue" description="Omega-N-methylarginine" evidence="2">
    <location>
        <position position="428"/>
    </location>
</feature>
<feature type="modified residue" description="Phosphoserine; alternate" evidence="2">
    <location>
        <position position="430"/>
    </location>
</feature>
<feature type="modified residue" description="Phosphoserine" evidence="2">
    <location>
        <position position="432"/>
    </location>
</feature>
<feature type="modified residue" description="Phosphothreonine" evidence="16">
    <location>
        <position position="434"/>
    </location>
</feature>
<feature type="modified residue" description="Phosphoserine" evidence="16">
    <location>
        <position position="436"/>
    </location>
</feature>
<feature type="modified residue" description="Omega-N-methylarginine" evidence="2">
    <location>
        <position position="474"/>
    </location>
</feature>
<feature type="modified residue" description="Omega-N-methylarginine" evidence="2">
    <location>
        <position position="532"/>
    </location>
</feature>
<feature type="modified residue" description="Omega-N-methylarginine" evidence="2">
    <location>
        <position position="545"/>
    </location>
</feature>
<feature type="modified residue" description="Phosphoserine" evidence="3">
    <location>
        <position position="549"/>
    </location>
</feature>
<feature type="modified residue" description="Phosphoserine; by PDPK1" evidence="4">
    <location>
        <position position="551"/>
    </location>
</feature>
<feature type="modified residue" description="Omega-N-methylarginine" evidence="2">
    <location>
        <position position="554"/>
    </location>
</feature>
<feature type="modified residue" description="Phosphoserine" evidence="16">
    <location>
        <position position="566"/>
    </location>
</feature>
<feature type="modified residue" description="Phosphoserine; by CaMK2" evidence="15 16">
    <location>
        <position position="566"/>
    </location>
</feature>
<feature type="modified residue" description="Phosphoserine; by CaMK2" evidence="15">
    <location>
        <position position="603"/>
    </location>
</feature>
<feature type="modified residue" description="Omega-N-methylarginine" evidence="2">
    <location>
        <position position="620"/>
    </location>
</feature>
<feature type="modified residue" description="Phosphoserine" evidence="2">
    <location>
        <position position="662"/>
    </location>
</feature>
<feature type="modified residue" description="Phosphoserine" evidence="16">
    <location>
        <position position="664"/>
    </location>
</feature>
<feature type="modified residue" description="Asymmetric dimethylarginine" evidence="2">
    <location>
        <position position="678"/>
    </location>
</feature>
<feature type="modified residue" description="Phosphoserine" evidence="2">
    <location>
        <position position="682"/>
    </location>
</feature>
<feature type="glycosylation site" description="O-linked (GlcNAc) serine" evidence="6 10">
    <location>
        <position position="55"/>
    </location>
</feature>
<feature type="glycosylation site" description="O-linked (GlcNAc) threonine" evidence="12">
    <location>
        <position position="56"/>
    </location>
</feature>
<feature type="glycosylation site" description="O-linked (GlcNAc) threonine" evidence="6 10">
    <location>
        <position position="87"/>
    </location>
</feature>
<feature type="glycosylation site" description="O-linked (GlcNAc) serine" evidence="10">
    <location>
        <position position="96"/>
    </location>
</feature>
<feature type="glycosylation site" description="O-linked (GlcNAc) serine" evidence="14">
    <location>
        <position position="103"/>
    </location>
</feature>
<feature type="glycosylation site" description="O-linked (GlcNAc) serine" evidence="10">
    <location>
        <position position="261"/>
    </location>
</feature>
<feature type="glycosylation site" description="O-linked (GlcNAc) serine; alternate" evidence="10">
    <location>
        <position position="430"/>
    </location>
</feature>
<feature type="glycosylation site" description="O-linked (GlcNAc) serine" evidence="6 10">
    <location>
        <position position="516"/>
    </location>
</feature>
<feature type="glycosylation site" description="O-linked (GlcNAc) threonine" evidence="6">
    <location>
        <position position="524"/>
    </location>
</feature>
<feature type="glycosylation site" description="O-linked (GlcNAc) threonine" evidence="6">
    <location>
        <position position="562"/>
    </location>
</feature>
<feature type="glycosylation site" description="O-linked (GlcNAc) serine" evidence="6">
    <location>
        <position position="576"/>
    </location>
</feature>
<feature type="splice variant" id="VSP_006318" description="In isoform IB." evidence="11">
    <original>NKSQSLTNA</original>
    <variation>KASPAQAQP</variation>
    <location>
        <begin position="660"/>
        <end position="668"/>
    </location>
</feature>
<feature type="splice variant" id="VSP_006319" description="In isoform IB." evidence="11">
    <location>
        <begin position="669"/>
        <end position="704"/>
    </location>
</feature>
<feature type="strand" evidence="17">
    <location>
        <begin position="114"/>
        <end position="119"/>
    </location>
</feature>
<feature type="helix" evidence="17">
    <location>
        <begin position="126"/>
        <end position="130"/>
    </location>
</feature>
<feature type="turn" evidence="17">
    <location>
        <begin position="136"/>
        <end position="138"/>
    </location>
</feature>
<feature type="strand" evidence="17">
    <location>
        <begin position="139"/>
        <end position="146"/>
    </location>
</feature>
<feature type="helix" evidence="17">
    <location>
        <begin position="148"/>
        <end position="150"/>
    </location>
</feature>
<feature type="strand" evidence="17">
    <location>
        <begin position="151"/>
        <end position="156"/>
    </location>
</feature>
<feature type="strand" evidence="17">
    <location>
        <begin position="161"/>
        <end position="169"/>
    </location>
</feature>
<feature type="strand" evidence="17">
    <location>
        <begin position="172"/>
        <end position="178"/>
    </location>
</feature>
<feature type="strand" evidence="17">
    <location>
        <begin position="181"/>
        <end position="185"/>
    </location>
</feature>
<feature type="helix" evidence="17">
    <location>
        <begin position="199"/>
        <end position="207"/>
    </location>
</feature>
<feature type="strand" evidence="17">
    <location>
        <begin position="212"/>
        <end position="214"/>
    </location>
</feature>
<feature type="helix" evidence="17">
    <location>
        <begin position="216"/>
        <end position="221"/>
    </location>
</feature>
<feature type="helix" evidence="17">
    <location>
        <begin position="225"/>
        <end position="239"/>
    </location>
</feature>
<feature type="turn" evidence="17">
    <location>
        <begin position="241"/>
        <end position="243"/>
    </location>
</feature>
<feature type="strand" evidence="17">
    <location>
        <begin position="250"/>
        <end position="254"/>
    </location>
</feature>
<feature type="helix" evidence="17">
    <location>
        <begin position="255"/>
        <end position="257"/>
    </location>
</feature>
<feature type="strand" evidence="17">
    <location>
        <begin position="262"/>
        <end position="272"/>
    </location>
</feature>
<feature type="turn" evidence="17">
    <location>
        <begin position="275"/>
        <end position="278"/>
    </location>
</feature>
<feature type="strand" evidence="17">
    <location>
        <begin position="279"/>
        <end position="282"/>
    </location>
</feature>
<feature type="helix" evidence="17">
    <location>
        <begin position="285"/>
        <end position="298"/>
    </location>
</feature>
<feature type="strand" evidence="17">
    <location>
        <begin position="302"/>
        <end position="306"/>
    </location>
</feature>
<feature type="strand" evidence="17">
    <location>
        <begin position="310"/>
        <end position="319"/>
    </location>
</feature>
<feature type="strand" evidence="17">
    <location>
        <begin position="322"/>
        <end position="333"/>
    </location>
</feature>
<feature type="strand" evidence="17">
    <location>
        <begin position="342"/>
        <end position="347"/>
    </location>
</feature>
<feature type="helix" evidence="17">
    <location>
        <begin position="351"/>
        <end position="360"/>
    </location>
</feature>
<feature type="helix" evidence="17">
    <location>
        <begin position="361"/>
        <end position="365"/>
    </location>
</feature>
<feature type="strand" evidence="17">
    <location>
        <begin position="368"/>
        <end position="377"/>
    </location>
</feature>
<feature type="strand" evidence="17">
    <location>
        <begin position="382"/>
        <end position="388"/>
    </location>
</feature>
<feature type="helix" evidence="18">
    <location>
        <begin position="396"/>
        <end position="398"/>
    </location>
</feature>
<feature type="helix" evidence="17">
    <location>
        <begin position="399"/>
        <end position="415"/>
    </location>
</feature>
<keyword id="KW-0002">3D-structure</keyword>
<keyword id="KW-0009">Actin-binding</keyword>
<keyword id="KW-0025">Alternative splicing</keyword>
<keyword id="KW-0966">Cell projection</keyword>
<keyword id="KW-0968">Cytoplasmic vesicle</keyword>
<keyword id="KW-0903">Direct protein sequencing</keyword>
<keyword id="KW-0325">Glycoprotein</keyword>
<keyword id="KW-0333">Golgi apparatus</keyword>
<keyword id="KW-0488">Methylation</keyword>
<keyword id="KW-0597">Phosphoprotein</keyword>
<keyword id="KW-1185">Reference proteome</keyword>
<keyword id="KW-0677">Repeat</keyword>
<keyword id="KW-0770">Synapse</keyword>
<reference key="1">
    <citation type="journal article" date="1989" name="Science">
        <title>Synapsins: mosaics of shared and individual domains in a family of synaptic vesicle phosphoproteins.</title>
        <authorList>
            <person name="Suedhof T.C."/>
            <person name="Czernik A.J."/>
            <person name="Kao H.-T."/>
            <person name="Takei K."/>
            <person name="Johnston P.A."/>
            <person name="Horiuchi A."/>
            <person name="Kanazir S.D."/>
            <person name="Wagner M.A."/>
            <person name="Perin M.S."/>
            <person name="de Camilli P."/>
            <person name="Greengard P."/>
        </authorList>
    </citation>
    <scope>NUCLEOTIDE SEQUENCE [MRNA]</scope>
    <source>
        <tissue>Brain</tissue>
    </source>
</reference>
<reference key="2">
    <citation type="journal article" date="1986" name="EMBO J.">
        <title>Determination and analysis of the primary structure of the nerve terminal specific phosphoprotein, synapsin I.</title>
        <authorList>
            <person name="McCaffery C.A."/>
            <person name="Degennaro L.J."/>
        </authorList>
    </citation>
    <scope>NUCLEOTIDE SEQUENCE [MRNA]</scope>
    <source>
        <tissue>Brain</tissue>
    </source>
</reference>
<reference key="3">
    <citation type="submission" date="2007-04" db="UniProtKB">
        <authorList>
            <person name="Lubec G."/>
            <person name="Diao W."/>
        </authorList>
    </citation>
    <scope>PROTEIN SEQUENCE OF 177-186 AND 239-256</scope>
    <scope>IDENTIFICATION BY MASS SPECTROMETRY</scope>
    <source>
        <strain>Sprague-Dawley</strain>
        <tissue>Hippocampus</tissue>
    </source>
</reference>
<reference key="4">
    <citation type="journal article" date="1987" name="Proc. Natl. Acad. Sci. U.S.A.">
        <title>Amino acid sequences surrounding the cAMP-dependent and calcium/calmodulin-dependent phosphorylation sites in rat and bovine synapsin I.</title>
        <authorList>
            <person name="Czernik A.J."/>
            <person name="Pang D.T."/>
            <person name="Greengard P."/>
        </authorList>
    </citation>
    <scope>PHOSPHORYLATION AT SER-566 AND SER-603</scope>
</reference>
<reference key="5">
    <citation type="journal article" date="1999" name="J. Neurochem.">
        <title>Glycosylation sites flank phosphorylation sites on synapsin I: O-linked N-acetylglucosamine residues are localized within domains mediating synapsin I interactions.</title>
        <authorList>
            <person name="Cole R.N."/>
            <person name="Hart G.W."/>
        </authorList>
    </citation>
    <scope>GLYCOSYLATION AT SER-55; THR-56; THR-87; SER-516; THR-524; THR-562 AND SER-576</scope>
</reference>
<reference key="6">
    <citation type="journal article" date="1999" name="Neuron">
        <title>A phospho-switch controls the dynamic association of synapsins with synaptic vesicles.</title>
        <authorList>
            <person name="Hosaka M."/>
            <person name="Hammer R.E."/>
            <person name="Sudhof T.C."/>
        </authorList>
    </citation>
    <scope>PHOSPHORYLATION AT SER-9</scope>
</reference>
<reference key="7">
    <citation type="journal article" date="2001" name="Nat. Neurosci.">
        <title>Synapsin dispersion and reclustering during synaptic activity.</title>
        <authorList>
            <person name="Chi P."/>
            <person name="Greengard P."/>
            <person name="Ryan T.A."/>
        </authorList>
    </citation>
    <scope>FUNCTION</scope>
    <scope>SUBCELLULAR LOCATION</scope>
</reference>
<reference key="8">
    <citation type="journal article" date="2002" name="Mol. Cell. Proteomics">
        <title>Mapping sites of O-GlcNAc modification using affinity tags for serine and threonine post-translational modifications.</title>
        <authorList>
            <person name="Wells L."/>
            <person name="Vosseller K."/>
            <person name="Cole R.N."/>
            <person name="Cronshaw J.M."/>
            <person name="Matunis M.J."/>
            <person name="Hart G.W."/>
        </authorList>
    </citation>
    <scope>GLYCOSYLATION AT SER-55; THR-87; SER-96; SER-103; SER-261; SER-430 AND SER-516</scope>
</reference>
<reference key="9">
    <citation type="journal article" date="2002" name="Proc. Natl. Acad. Sci. U.S.A.">
        <title>Neuronal nitric-oxide synthase localization mediated by a ternary complex with synapsin and CAPON.</title>
        <authorList>
            <person name="Jaffrey S.R."/>
            <person name="Benfenati F."/>
            <person name="Snowman A.M."/>
            <person name="Czernik A.J."/>
            <person name="Snyder S.H."/>
        </authorList>
    </citation>
    <scope>INTERACTION WITH NOS1 AND CAPON</scope>
    <scope>FUNCTION</scope>
</reference>
<reference key="10">
    <citation type="journal article" date="2012" name="Nat. Commun.">
        <title>Quantitative maps of protein phosphorylation sites across 14 different rat organs and tissues.</title>
        <authorList>
            <person name="Lundby A."/>
            <person name="Secher A."/>
            <person name="Lage K."/>
            <person name="Nordsborg N.B."/>
            <person name="Dmytriyev A."/>
            <person name="Lundby C."/>
            <person name="Olsen J.V."/>
        </authorList>
    </citation>
    <scope>PHOSPHORYLATION [LARGE SCALE ANALYSIS] AT SER-39; SER-62; SER-67; SER-425; THR-434; SER-436; SER-566 AND SER-664</scope>
    <scope>IDENTIFICATION BY MASS SPECTROMETRY [LARGE SCALE ANALYSIS]</scope>
</reference>
<gene>
    <name type="primary">Syn1</name>
</gene>
<evidence type="ECO:0000250" key="1"/>
<evidence type="ECO:0000250" key="2">
    <source>
        <dbReference type="UniProtKB" id="O88935"/>
    </source>
</evidence>
<evidence type="ECO:0000250" key="3">
    <source>
        <dbReference type="UniProtKB" id="P17599"/>
    </source>
</evidence>
<evidence type="ECO:0000250" key="4">
    <source>
        <dbReference type="UniProtKB" id="P17600"/>
    </source>
</evidence>
<evidence type="ECO:0000256" key="5">
    <source>
        <dbReference type="SAM" id="MobiDB-lite"/>
    </source>
</evidence>
<evidence type="ECO:0000269" key="6">
    <source>
    </source>
</evidence>
<evidence type="ECO:0000269" key="7">
    <source>
    </source>
</evidence>
<evidence type="ECO:0000269" key="8">
    <source>
    </source>
</evidence>
<evidence type="ECO:0000269" key="9">
    <source>
    </source>
</evidence>
<evidence type="ECO:0000269" key="10">
    <source>
    </source>
</evidence>
<evidence type="ECO:0000305" key="11"/>
<evidence type="ECO:0000305" key="12">
    <source>
    </source>
</evidence>
<evidence type="ECO:0000305" key="13">
    <source>
    </source>
</evidence>
<evidence type="ECO:0000305" key="14">
    <source>
    </source>
</evidence>
<evidence type="ECO:0000305" key="15">
    <source>
    </source>
</evidence>
<evidence type="ECO:0007744" key="16">
    <source>
    </source>
</evidence>
<evidence type="ECO:0007829" key="17">
    <source>
        <dbReference type="PDB" id="1PK8"/>
    </source>
</evidence>
<evidence type="ECO:0007829" key="18">
    <source>
        <dbReference type="PDB" id="1PX2"/>
    </source>
</evidence>
<sequence length="704" mass="73988">MNYLRRRLSDSNFMANLPNGYMTDLQRPQPPPPPPSAASPGATPGSAAASAERASTAAPVASPAAPSPGSSGGGGFFSSLSNAVKQTTAAAAATFSEQVGGGSGGAGRGGAAARVLLVIDEPHTDWAKYFKGKKIHGEIDIKVEQAEFSDLNLVAHANGGFSVDMEVLRNGVKVVRSLKPDFVLIRQHAFSMARNGDYRSLVIGLQYAGIPSVNSLHSVYNFCDKPWVFAQMVRLHKKLGTEEFPLIDQTFYPNHKEMLSSTTYPVVVKMGHAHSGMGKVKVDNQHDFQDIASVVALTKTYATAEPFIDAKYDVRVQKIGQNYKAYMRTSVSGNWKTNTGSAMLEQIAMSDRYKLWVDTCSEIFGGLDICAVEALHGKDGRDHIIEVVGSSMPLIGDHQDEDKQLIVELVVNKMTQALPRQRDASPGRGSHSQTPSPGALPLGRQTSQQPAGPPAQQRPPPQGGPPQPGPGPQRQGPPLQQRPPPQGQQHLSGLGPPAGSPLPQRLPSPTAAPQQSASQATPMTQGQGRQSRPVAGGPGAPPAARPPASPSPQRQAGPPQATRQASISGPAPPKVSGASPGGQQRQGPPQKPPGPAGPIRQASQAGPGPRTGPPTTQQPRPSGPGPAGRPTKPQLAQKPSQDVPPPIIAAAGGPPHPQLNKSQSLTNAFNLPEPAPPRPSLSQDEVKAETIRSLRKSFASLFSD</sequence>
<accession>P09951</accession>
<accession>Q9WUX7</accession>
<protein>
    <recommendedName>
        <fullName>Synapsin-1</fullName>
    </recommendedName>
    <alternativeName>
        <fullName>Synapsin I</fullName>
    </alternativeName>
</protein>
<dbReference type="EMBL" id="M27812">
    <property type="protein sequence ID" value="AAA42145.1"/>
    <property type="molecule type" value="mRNA"/>
</dbReference>
<dbReference type="EMBL" id="M27924">
    <property type="protein sequence ID" value="AAA42148.1"/>
    <property type="molecule type" value="mRNA"/>
</dbReference>
<dbReference type="EMBL" id="X04655">
    <property type="protein sequence ID" value="CAA28353.1"/>
    <property type="status" value="ALT_SEQ"/>
    <property type="molecule type" value="mRNA"/>
</dbReference>
<dbReference type="PIR" id="A25704">
    <property type="entry name" value="A25704"/>
</dbReference>
<dbReference type="PIR" id="A30411">
    <property type="entry name" value="A30411"/>
</dbReference>
<dbReference type="RefSeq" id="NP_001104252.1">
    <molecule id="P09951-2"/>
    <property type="nucleotide sequence ID" value="NM_001110782.2"/>
</dbReference>
<dbReference type="RefSeq" id="NP_062006.1">
    <molecule id="P09951-1"/>
    <property type="nucleotide sequence ID" value="NM_019133.2"/>
</dbReference>
<dbReference type="PDB" id="1PK8">
    <property type="method" value="X-ray"/>
    <property type="resolution" value="2.10 A"/>
    <property type="chains" value="A/B/C/D/E/F/G/H=2-421"/>
</dbReference>
<dbReference type="PDB" id="1PX2">
    <property type="method" value="X-ray"/>
    <property type="resolution" value="2.23 A"/>
    <property type="chains" value="A/B=2-421"/>
</dbReference>
<dbReference type="PDBsum" id="1PK8"/>
<dbReference type="PDBsum" id="1PX2"/>
<dbReference type="SMR" id="P09951"/>
<dbReference type="BioGRID" id="247051">
    <property type="interactions" value="6"/>
</dbReference>
<dbReference type="CORUM" id="P09951"/>
<dbReference type="FunCoup" id="P09951">
    <property type="interactions" value="1058"/>
</dbReference>
<dbReference type="IntAct" id="P09951">
    <property type="interactions" value="8"/>
</dbReference>
<dbReference type="MINT" id="P09951"/>
<dbReference type="STRING" id="10116.ENSRNOP00000014250"/>
<dbReference type="GlyCosmos" id="P09951">
    <property type="glycosylation" value="11 sites, No reported glycans"/>
</dbReference>
<dbReference type="GlyGen" id="P09951">
    <property type="glycosylation" value="14 sites, 1 O-linked glycan (11 sites)"/>
</dbReference>
<dbReference type="iPTMnet" id="P09951"/>
<dbReference type="PhosphoSitePlus" id="P09951"/>
<dbReference type="jPOST" id="P09951"/>
<dbReference type="PaxDb" id="10116-ENSRNOP00000014250"/>
<dbReference type="ABCD" id="P09951">
    <property type="antibodies" value="1 sequenced antibody"/>
</dbReference>
<dbReference type="Ensembl" id="ENSRNOT00000014250.7">
    <molecule id="P09951-1"/>
    <property type="protein sequence ID" value="ENSRNOP00000014250.5"/>
    <property type="gene ID" value="ENSRNOG00000010365.8"/>
</dbReference>
<dbReference type="GeneID" id="24949"/>
<dbReference type="KEGG" id="rno:24949"/>
<dbReference type="UCSC" id="RGD:3797">
    <molecule id="P09951-1"/>
    <property type="organism name" value="rat"/>
</dbReference>
<dbReference type="AGR" id="RGD:3797"/>
<dbReference type="CTD" id="6853"/>
<dbReference type="RGD" id="3797">
    <property type="gene designation" value="Syn1"/>
</dbReference>
<dbReference type="eggNOG" id="KOG3895">
    <property type="taxonomic scope" value="Eukaryota"/>
</dbReference>
<dbReference type="GeneTree" id="ENSGT00940000161978"/>
<dbReference type="HOGENOM" id="CLU_010582_3_0_1"/>
<dbReference type="InParanoid" id="P09951"/>
<dbReference type="OMA" id="MSDKYKM"/>
<dbReference type="OrthoDB" id="10249572at2759"/>
<dbReference type="PhylomeDB" id="P09951"/>
<dbReference type="Reactome" id="R-RNO-181429">
    <property type="pathway name" value="Serotonin Neurotransmitter Release Cycle"/>
</dbReference>
<dbReference type="Reactome" id="R-RNO-212676">
    <property type="pathway name" value="Dopamine Neurotransmitter Release Cycle"/>
</dbReference>
<dbReference type="EvolutionaryTrace" id="P09951"/>
<dbReference type="PRO" id="PR:P09951"/>
<dbReference type="Proteomes" id="UP000002494">
    <property type="component" value="Chromosome X"/>
</dbReference>
<dbReference type="Bgee" id="ENSRNOG00000010365">
    <property type="expression patterns" value="Expressed in frontal cortex and 15 other cell types or tissues"/>
</dbReference>
<dbReference type="GO" id="GO:0030424">
    <property type="term" value="C:axon"/>
    <property type="evidence" value="ECO:0000266"/>
    <property type="project" value="RGD"/>
</dbReference>
<dbReference type="GO" id="GO:0044297">
    <property type="term" value="C:cell body"/>
    <property type="evidence" value="ECO:0000266"/>
    <property type="project" value="RGD"/>
</dbReference>
<dbReference type="GO" id="GO:0005856">
    <property type="term" value="C:cytoskeleton"/>
    <property type="evidence" value="ECO:0000266"/>
    <property type="project" value="RGD"/>
</dbReference>
<dbReference type="GO" id="GO:0030425">
    <property type="term" value="C:dendrite"/>
    <property type="evidence" value="ECO:0000314"/>
    <property type="project" value="BHF-UCL"/>
</dbReference>
<dbReference type="GO" id="GO:0098850">
    <property type="term" value="C:extrinsic component of synaptic vesicle membrane"/>
    <property type="evidence" value="ECO:0000314"/>
    <property type="project" value="SynGO"/>
</dbReference>
<dbReference type="GO" id="GO:0005794">
    <property type="term" value="C:Golgi apparatus"/>
    <property type="evidence" value="ECO:0007669"/>
    <property type="project" value="UniProtKB-SubCell"/>
</dbReference>
<dbReference type="GO" id="GO:0014069">
    <property type="term" value="C:postsynaptic density"/>
    <property type="evidence" value="ECO:0000266"/>
    <property type="project" value="RGD"/>
</dbReference>
<dbReference type="GO" id="GO:0098793">
    <property type="term" value="C:presynapse"/>
    <property type="evidence" value="ECO:0000266"/>
    <property type="project" value="RGD"/>
</dbReference>
<dbReference type="GO" id="GO:0048786">
    <property type="term" value="C:presynaptic active zone"/>
    <property type="evidence" value="ECO:0000314"/>
    <property type="project" value="MGI"/>
</dbReference>
<dbReference type="GO" id="GO:0098685">
    <property type="term" value="C:Schaffer collateral - CA1 synapse"/>
    <property type="evidence" value="ECO:0000266"/>
    <property type="project" value="RGD"/>
</dbReference>
<dbReference type="GO" id="GO:0045202">
    <property type="term" value="C:synapse"/>
    <property type="evidence" value="ECO:0000314"/>
    <property type="project" value="MGI"/>
</dbReference>
<dbReference type="GO" id="GO:0008021">
    <property type="term" value="C:synaptic vesicle"/>
    <property type="evidence" value="ECO:0000314"/>
    <property type="project" value="UniProtKB"/>
</dbReference>
<dbReference type="GO" id="GO:0030672">
    <property type="term" value="C:synaptic vesicle membrane"/>
    <property type="evidence" value="ECO:0000266"/>
    <property type="project" value="RGD"/>
</dbReference>
<dbReference type="GO" id="GO:0000795">
    <property type="term" value="C:synaptonemal complex"/>
    <property type="evidence" value="ECO:0000266"/>
    <property type="project" value="RGD"/>
</dbReference>
<dbReference type="GO" id="GO:0043195">
    <property type="term" value="C:terminal bouton"/>
    <property type="evidence" value="ECO:0007005"/>
    <property type="project" value="ParkinsonsUK-UCL"/>
</dbReference>
<dbReference type="GO" id="GO:0003779">
    <property type="term" value="F:actin binding"/>
    <property type="evidence" value="ECO:0007669"/>
    <property type="project" value="UniProtKB-KW"/>
</dbReference>
<dbReference type="GO" id="GO:0005524">
    <property type="term" value="F:ATP binding"/>
    <property type="evidence" value="ECO:0007669"/>
    <property type="project" value="InterPro"/>
</dbReference>
<dbReference type="GO" id="GO:0048306">
    <property type="term" value="F:calcium-dependent protein binding"/>
    <property type="evidence" value="ECO:0000353"/>
    <property type="project" value="RGD"/>
</dbReference>
<dbReference type="GO" id="GO:0042802">
    <property type="term" value="F:identical protein binding"/>
    <property type="evidence" value="ECO:0000266"/>
    <property type="project" value="RGD"/>
</dbReference>
<dbReference type="GO" id="GO:0019901">
    <property type="term" value="F:protein kinase binding"/>
    <property type="evidence" value="ECO:0000266"/>
    <property type="project" value="RGD"/>
</dbReference>
<dbReference type="GO" id="GO:0048666">
    <property type="term" value="P:neuron development"/>
    <property type="evidence" value="ECO:0000270"/>
    <property type="project" value="RGD"/>
</dbReference>
<dbReference type="GO" id="GO:0007269">
    <property type="term" value="P:neurotransmitter secretion"/>
    <property type="evidence" value="ECO:0000266"/>
    <property type="project" value="RGD"/>
</dbReference>
<dbReference type="GO" id="GO:0098693">
    <property type="term" value="P:regulation of synaptic vesicle cycle"/>
    <property type="evidence" value="ECO:0000266"/>
    <property type="project" value="RGD"/>
</dbReference>
<dbReference type="GO" id="GO:2000300">
    <property type="term" value="P:regulation of synaptic vesicle exocytosis"/>
    <property type="evidence" value="ECO:0000266"/>
    <property type="project" value="RGD"/>
</dbReference>
<dbReference type="GO" id="GO:0050808">
    <property type="term" value="P:synapse organization"/>
    <property type="evidence" value="ECO:0000315"/>
    <property type="project" value="RGD"/>
</dbReference>
<dbReference type="GO" id="GO:0097091">
    <property type="term" value="P:synaptic vesicle clustering"/>
    <property type="evidence" value="ECO:0000318"/>
    <property type="project" value="GO_Central"/>
</dbReference>
<dbReference type="GO" id="GO:0099504">
    <property type="term" value="P:synaptic vesicle cycle"/>
    <property type="evidence" value="ECO:0000266"/>
    <property type="project" value="RGD"/>
</dbReference>
<dbReference type="DisProt" id="DP02741"/>
<dbReference type="FunFam" id="3.30.1490.20:FF:000008">
    <property type="entry name" value="Synapsin I"/>
    <property type="match status" value="1"/>
</dbReference>
<dbReference type="FunFam" id="3.30.470.20:FF:000042">
    <property type="entry name" value="Synapsin III"/>
    <property type="match status" value="1"/>
</dbReference>
<dbReference type="FunFam" id="3.40.50.20:FF:000008">
    <property type="entry name" value="Synapsin III"/>
    <property type="match status" value="1"/>
</dbReference>
<dbReference type="Gene3D" id="3.40.50.20">
    <property type="match status" value="1"/>
</dbReference>
<dbReference type="Gene3D" id="3.30.1490.20">
    <property type="entry name" value="ATP-grasp fold, A domain"/>
    <property type="match status" value="1"/>
</dbReference>
<dbReference type="Gene3D" id="3.30.470.20">
    <property type="entry name" value="ATP-grasp fold, B domain"/>
    <property type="match status" value="1"/>
</dbReference>
<dbReference type="InterPro" id="IPR013815">
    <property type="entry name" value="ATP_grasp_subdomain_1"/>
</dbReference>
<dbReference type="InterPro" id="IPR016185">
    <property type="entry name" value="PreATP-grasp_dom_sf"/>
</dbReference>
<dbReference type="InterPro" id="IPR001359">
    <property type="entry name" value="Synapsin"/>
</dbReference>
<dbReference type="InterPro" id="IPR020898">
    <property type="entry name" value="Synapsin_ATP-bd_dom"/>
</dbReference>
<dbReference type="InterPro" id="IPR019735">
    <property type="entry name" value="Synapsin_CS"/>
</dbReference>
<dbReference type="InterPro" id="IPR019736">
    <property type="entry name" value="Synapsin_P_site"/>
</dbReference>
<dbReference type="InterPro" id="IPR020897">
    <property type="entry name" value="Synapsin_pre-ATP-grasp_dom"/>
</dbReference>
<dbReference type="PANTHER" id="PTHR10841">
    <property type="entry name" value="SYNAPSIN"/>
    <property type="match status" value="1"/>
</dbReference>
<dbReference type="PANTHER" id="PTHR10841:SF24">
    <property type="entry name" value="SYNAPSIN-1"/>
    <property type="match status" value="1"/>
</dbReference>
<dbReference type="Pfam" id="PF02078">
    <property type="entry name" value="Synapsin"/>
    <property type="match status" value="1"/>
</dbReference>
<dbReference type="Pfam" id="PF02750">
    <property type="entry name" value="Synapsin_C"/>
    <property type="match status" value="1"/>
</dbReference>
<dbReference type="Pfam" id="PF10581">
    <property type="entry name" value="Synapsin_N"/>
    <property type="match status" value="1"/>
</dbReference>
<dbReference type="PRINTS" id="PR01368">
    <property type="entry name" value="SYNAPSIN"/>
</dbReference>
<dbReference type="SUPFAM" id="SSF56059">
    <property type="entry name" value="Glutathione synthetase ATP-binding domain-like"/>
    <property type="match status" value="1"/>
</dbReference>
<dbReference type="SUPFAM" id="SSF52440">
    <property type="entry name" value="PreATP-grasp domain"/>
    <property type="match status" value="1"/>
</dbReference>
<dbReference type="PROSITE" id="PS00415">
    <property type="entry name" value="SYNAPSIN_1"/>
    <property type="match status" value="1"/>
</dbReference>
<dbReference type="PROSITE" id="PS00416">
    <property type="entry name" value="SYNAPSIN_2"/>
    <property type="match status" value="1"/>
</dbReference>
<name>SYN1_RAT</name>
<proteinExistence type="evidence at protein level"/>
<comment type="function">
    <text evidence="2 8 9">Neuronal phosphoprotein that coats synaptic vesicles, and binds to the cytoskeleton. Acts as a regulator of synaptic vesicles trafficking, involved in the control of neurotransmitter release at the pre-synaptic terminal (PubMed:11685225). Also involved in the regulation of axon outgrowth and synaptogenesis (By similarity). The complex formed with NOS1 and CAPON proteins is necessary for specific nitric-oxide functions at a presynaptic level (PubMed:11867766).</text>
</comment>
<comment type="subunit">
    <text evidence="2 4 9">Homodimer (By similarity). Can form oligomers with SYN2 (By similarity). Interacts with CAPON (PubMed:11867766). Forms a ternary complex with NOS1 (PubMed:11867766). Isoform Ib interacts with PRNP (By similarity).</text>
</comment>
<comment type="subcellular location">
    <subcellularLocation>
        <location evidence="2">Synapse</location>
    </subcellularLocation>
    <subcellularLocation>
        <location evidence="2">Golgi apparatus</location>
    </subcellularLocation>
    <subcellularLocation>
        <location evidence="8">Presynapse</location>
    </subcellularLocation>
    <subcellularLocation>
        <location evidence="8">Cytoplasmic vesicle</location>
        <location evidence="8">Secretory vesicle</location>
        <location evidence="8">Synaptic vesicle</location>
    </subcellularLocation>
    <text evidence="8">Dissociates from synaptic vesicles and redistributes into the axon during action potential firing, in a step that precedes fusion of vesicles with the plasma membrane. Reclusters to presynapses after the cessation of synaptic activity.</text>
</comment>
<comment type="alternative products">
    <event type="alternative splicing"/>
    <isoform>
        <id>P09951-1</id>
        <name>IA</name>
        <sequence type="displayed"/>
    </isoform>
    <isoform>
        <id>P09951-2</id>
        <name>IB</name>
        <sequence type="described" ref="VSP_006318 VSP_006319"/>
    </isoform>
</comment>
<comment type="domain">
    <text evidence="1">The A region binds phospholipids with a preference for negatively charged species.</text>
</comment>
<comment type="PTM">
    <text evidence="7 8">Substrate of different protein kinases. Phosphorylation, including phosphorylation at Ser-9, promotes synapsin-1 dissociation from synaptic vesicles, regulates its rate of dispersion, and controls the kinetics of vesicle pool turnover (PubMed:10571231, PubMed:11685225).</text>
</comment>
<comment type="similarity">
    <text evidence="11">Belongs to the synapsin family.</text>
</comment>
<comment type="sequence caution" evidence="11">
    <conflict type="miscellaneous discrepancy">
        <sequence resource="EMBL-CDS" id="CAA28353"/>
    </conflict>
    <text>Sequencing errors.</text>
</comment>